<dbReference type="EC" id="1.17.1.8" evidence="1"/>
<dbReference type="EMBL" id="AM286415">
    <property type="protein sequence ID" value="CAL10733.1"/>
    <property type="molecule type" value="Genomic_DNA"/>
</dbReference>
<dbReference type="RefSeq" id="WP_005166986.1">
    <property type="nucleotide sequence ID" value="NC_008800.1"/>
</dbReference>
<dbReference type="RefSeq" id="YP_001004973.1">
    <property type="nucleotide sequence ID" value="NC_008800.1"/>
</dbReference>
<dbReference type="SMR" id="A1JJE5"/>
<dbReference type="KEGG" id="yen:YE0620"/>
<dbReference type="PATRIC" id="fig|393305.7.peg.714"/>
<dbReference type="eggNOG" id="COG0289">
    <property type="taxonomic scope" value="Bacteria"/>
</dbReference>
<dbReference type="HOGENOM" id="CLU_047479_2_1_6"/>
<dbReference type="OrthoDB" id="9790352at2"/>
<dbReference type="UniPathway" id="UPA00034">
    <property type="reaction ID" value="UER00018"/>
</dbReference>
<dbReference type="Proteomes" id="UP000000642">
    <property type="component" value="Chromosome"/>
</dbReference>
<dbReference type="GO" id="GO:0005829">
    <property type="term" value="C:cytosol"/>
    <property type="evidence" value="ECO:0007669"/>
    <property type="project" value="TreeGrafter"/>
</dbReference>
<dbReference type="GO" id="GO:0008839">
    <property type="term" value="F:4-hydroxy-tetrahydrodipicolinate reductase"/>
    <property type="evidence" value="ECO:0007669"/>
    <property type="project" value="UniProtKB-EC"/>
</dbReference>
<dbReference type="GO" id="GO:0051287">
    <property type="term" value="F:NAD binding"/>
    <property type="evidence" value="ECO:0007669"/>
    <property type="project" value="UniProtKB-UniRule"/>
</dbReference>
<dbReference type="GO" id="GO:0050661">
    <property type="term" value="F:NADP binding"/>
    <property type="evidence" value="ECO:0007669"/>
    <property type="project" value="UniProtKB-UniRule"/>
</dbReference>
<dbReference type="GO" id="GO:0016726">
    <property type="term" value="F:oxidoreductase activity, acting on CH or CH2 groups, NAD or NADP as acceptor"/>
    <property type="evidence" value="ECO:0007669"/>
    <property type="project" value="UniProtKB-UniRule"/>
</dbReference>
<dbReference type="GO" id="GO:0019877">
    <property type="term" value="P:diaminopimelate biosynthetic process"/>
    <property type="evidence" value="ECO:0007669"/>
    <property type="project" value="UniProtKB-UniRule"/>
</dbReference>
<dbReference type="GO" id="GO:0009089">
    <property type="term" value="P:lysine biosynthetic process via diaminopimelate"/>
    <property type="evidence" value="ECO:0007669"/>
    <property type="project" value="UniProtKB-UniRule"/>
</dbReference>
<dbReference type="CDD" id="cd02274">
    <property type="entry name" value="DHDPR_N"/>
    <property type="match status" value="1"/>
</dbReference>
<dbReference type="FunFam" id="3.30.360.10:FF:000004">
    <property type="entry name" value="4-hydroxy-tetrahydrodipicolinate reductase"/>
    <property type="match status" value="1"/>
</dbReference>
<dbReference type="FunFam" id="3.40.50.720:FF:000048">
    <property type="entry name" value="4-hydroxy-tetrahydrodipicolinate reductase"/>
    <property type="match status" value="1"/>
</dbReference>
<dbReference type="Gene3D" id="3.30.360.10">
    <property type="entry name" value="Dihydrodipicolinate Reductase, domain 2"/>
    <property type="match status" value="1"/>
</dbReference>
<dbReference type="Gene3D" id="3.40.50.720">
    <property type="entry name" value="NAD(P)-binding Rossmann-like Domain"/>
    <property type="match status" value="1"/>
</dbReference>
<dbReference type="HAMAP" id="MF_00102">
    <property type="entry name" value="DapB"/>
    <property type="match status" value="1"/>
</dbReference>
<dbReference type="InterPro" id="IPR022663">
    <property type="entry name" value="DapB_C"/>
</dbReference>
<dbReference type="InterPro" id="IPR000846">
    <property type="entry name" value="DapB_N"/>
</dbReference>
<dbReference type="InterPro" id="IPR022664">
    <property type="entry name" value="DapB_N_CS"/>
</dbReference>
<dbReference type="InterPro" id="IPR023940">
    <property type="entry name" value="DHDPR_bac"/>
</dbReference>
<dbReference type="InterPro" id="IPR036291">
    <property type="entry name" value="NAD(P)-bd_dom_sf"/>
</dbReference>
<dbReference type="NCBIfam" id="TIGR00036">
    <property type="entry name" value="dapB"/>
    <property type="match status" value="1"/>
</dbReference>
<dbReference type="PANTHER" id="PTHR20836:SF0">
    <property type="entry name" value="4-HYDROXY-TETRAHYDRODIPICOLINATE REDUCTASE 1, CHLOROPLASTIC-RELATED"/>
    <property type="match status" value="1"/>
</dbReference>
<dbReference type="PANTHER" id="PTHR20836">
    <property type="entry name" value="DIHYDRODIPICOLINATE REDUCTASE"/>
    <property type="match status" value="1"/>
</dbReference>
<dbReference type="Pfam" id="PF05173">
    <property type="entry name" value="DapB_C"/>
    <property type="match status" value="1"/>
</dbReference>
<dbReference type="Pfam" id="PF01113">
    <property type="entry name" value="DapB_N"/>
    <property type="match status" value="1"/>
</dbReference>
<dbReference type="PIRSF" id="PIRSF000161">
    <property type="entry name" value="DHPR"/>
    <property type="match status" value="1"/>
</dbReference>
<dbReference type="SUPFAM" id="SSF55347">
    <property type="entry name" value="Glyceraldehyde-3-phosphate dehydrogenase-like, C-terminal domain"/>
    <property type="match status" value="1"/>
</dbReference>
<dbReference type="SUPFAM" id="SSF51735">
    <property type="entry name" value="NAD(P)-binding Rossmann-fold domains"/>
    <property type="match status" value="1"/>
</dbReference>
<dbReference type="PROSITE" id="PS01298">
    <property type="entry name" value="DAPB"/>
    <property type="match status" value="1"/>
</dbReference>
<name>DAPB_YERE8</name>
<protein>
    <recommendedName>
        <fullName evidence="1">4-hydroxy-tetrahydrodipicolinate reductase</fullName>
        <shortName evidence="1">HTPA reductase</shortName>
        <ecNumber evidence="1">1.17.1.8</ecNumber>
    </recommendedName>
</protein>
<keyword id="KW-0028">Amino-acid biosynthesis</keyword>
<keyword id="KW-0963">Cytoplasm</keyword>
<keyword id="KW-0220">Diaminopimelate biosynthesis</keyword>
<keyword id="KW-0457">Lysine biosynthesis</keyword>
<keyword id="KW-0520">NAD</keyword>
<keyword id="KW-0521">NADP</keyword>
<keyword id="KW-0560">Oxidoreductase</keyword>
<proteinExistence type="inferred from homology"/>
<sequence>MTNSTIRIAVVGAGGRMGRQLIQAITQTKGVVLGAAVERAGSTLVGSDAGELAGTGLLNIAVSDDLSKVTDHFDVLIDFTRPEGTLEHLAICRAHHKAMVIGTTGFDDAGKAAISAASAEIGIVFAANFSVGVNVVLKLLEKAAKVMGDYTDIEIIEAHHRYKVDAPSGTALAMGEAIAESLGRSLKDCAVYTREGHTGERKPGTIGFATVRAGDIVGEHTAMFADIGERVEITHKATSRMTFANGAVKSAIWLSNHDNGLFDMRDVLSLNEL</sequence>
<feature type="chain" id="PRO_1000008662" description="4-hydroxy-tetrahydrodipicolinate reductase">
    <location>
        <begin position="1"/>
        <end position="273"/>
    </location>
</feature>
<feature type="active site" description="Proton donor/acceptor" evidence="1">
    <location>
        <position position="159"/>
    </location>
</feature>
<feature type="active site" description="Proton donor" evidence="1">
    <location>
        <position position="163"/>
    </location>
</feature>
<feature type="binding site" evidence="1">
    <location>
        <begin position="12"/>
        <end position="17"/>
    </location>
    <ligand>
        <name>NAD(+)</name>
        <dbReference type="ChEBI" id="CHEBI:57540"/>
    </ligand>
</feature>
<feature type="binding site" evidence="1">
    <location>
        <position position="38"/>
    </location>
    <ligand>
        <name>NAD(+)</name>
        <dbReference type="ChEBI" id="CHEBI:57540"/>
    </ligand>
</feature>
<feature type="binding site" evidence="1">
    <location>
        <position position="39"/>
    </location>
    <ligand>
        <name>NADP(+)</name>
        <dbReference type="ChEBI" id="CHEBI:58349"/>
    </ligand>
</feature>
<feature type="binding site" evidence="1">
    <location>
        <begin position="102"/>
        <end position="104"/>
    </location>
    <ligand>
        <name>NAD(+)</name>
        <dbReference type="ChEBI" id="CHEBI:57540"/>
    </ligand>
</feature>
<feature type="binding site" evidence="1">
    <location>
        <begin position="126"/>
        <end position="129"/>
    </location>
    <ligand>
        <name>NAD(+)</name>
        <dbReference type="ChEBI" id="CHEBI:57540"/>
    </ligand>
</feature>
<feature type="binding site" evidence="1">
    <location>
        <position position="160"/>
    </location>
    <ligand>
        <name>(S)-2,3,4,5-tetrahydrodipicolinate</name>
        <dbReference type="ChEBI" id="CHEBI:16845"/>
    </ligand>
</feature>
<feature type="binding site" evidence="1">
    <location>
        <begin position="169"/>
        <end position="170"/>
    </location>
    <ligand>
        <name>(S)-2,3,4,5-tetrahydrodipicolinate</name>
        <dbReference type="ChEBI" id="CHEBI:16845"/>
    </ligand>
</feature>
<accession>A1JJE5</accession>
<gene>
    <name evidence="1" type="primary">dapB</name>
    <name type="ordered locus">YE0620</name>
</gene>
<organism>
    <name type="scientific">Yersinia enterocolitica serotype O:8 / biotype 1B (strain NCTC 13174 / 8081)</name>
    <dbReference type="NCBI Taxonomy" id="393305"/>
    <lineage>
        <taxon>Bacteria</taxon>
        <taxon>Pseudomonadati</taxon>
        <taxon>Pseudomonadota</taxon>
        <taxon>Gammaproteobacteria</taxon>
        <taxon>Enterobacterales</taxon>
        <taxon>Yersiniaceae</taxon>
        <taxon>Yersinia</taxon>
    </lineage>
</organism>
<comment type="function">
    <text evidence="1">Catalyzes the conversion of 4-hydroxy-tetrahydrodipicolinate (HTPA) to tetrahydrodipicolinate.</text>
</comment>
<comment type="catalytic activity">
    <reaction evidence="1">
        <text>(S)-2,3,4,5-tetrahydrodipicolinate + NAD(+) + H2O = (2S,4S)-4-hydroxy-2,3,4,5-tetrahydrodipicolinate + NADH + H(+)</text>
        <dbReference type="Rhea" id="RHEA:35323"/>
        <dbReference type="ChEBI" id="CHEBI:15377"/>
        <dbReference type="ChEBI" id="CHEBI:15378"/>
        <dbReference type="ChEBI" id="CHEBI:16845"/>
        <dbReference type="ChEBI" id="CHEBI:57540"/>
        <dbReference type="ChEBI" id="CHEBI:57945"/>
        <dbReference type="ChEBI" id="CHEBI:67139"/>
        <dbReference type="EC" id="1.17.1.8"/>
    </reaction>
</comment>
<comment type="catalytic activity">
    <reaction evidence="1">
        <text>(S)-2,3,4,5-tetrahydrodipicolinate + NADP(+) + H2O = (2S,4S)-4-hydroxy-2,3,4,5-tetrahydrodipicolinate + NADPH + H(+)</text>
        <dbReference type="Rhea" id="RHEA:35331"/>
        <dbReference type="ChEBI" id="CHEBI:15377"/>
        <dbReference type="ChEBI" id="CHEBI:15378"/>
        <dbReference type="ChEBI" id="CHEBI:16845"/>
        <dbReference type="ChEBI" id="CHEBI:57783"/>
        <dbReference type="ChEBI" id="CHEBI:58349"/>
        <dbReference type="ChEBI" id="CHEBI:67139"/>
        <dbReference type="EC" id="1.17.1.8"/>
    </reaction>
</comment>
<comment type="pathway">
    <text evidence="1">Amino-acid biosynthesis; L-lysine biosynthesis via DAP pathway; (S)-tetrahydrodipicolinate from L-aspartate: step 4/4.</text>
</comment>
<comment type="subunit">
    <text evidence="1">Homotetramer.</text>
</comment>
<comment type="subcellular location">
    <subcellularLocation>
        <location evidence="1">Cytoplasm</location>
    </subcellularLocation>
</comment>
<comment type="similarity">
    <text evidence="1">Belongs to the DapB family.</text>
</comment>
<comment type="caution">
    <text evidence="2">Was originally thought to be a dihydrodipicolinate reductase (DHDPR), catalyzing the conversion of dihydrodipicolinate to tetrahydrodipicolinate. However, it was shown in E.coli that the substrate of the enzymatic reaction is not dihydrodipicolinate (DHDP) but in fact (2S,4S)-4-hydroxy-2,3,4,5-tetrahydrodipicolinic acid (HTPA), the product released by the DapA-catalyzed reaction.</text>
</comment>
<evidence type="ECO:0000255" key="1">
    <source>
        <dbReference type="HAMAP-Rule" id="MF_00102"/>
    </source>
</evidence>
<evidence type="ECO:0000305" key="2"/>
<reference key="1">
    <citation type="journal article" date="2006" name="PLoS Genet.">
        <title>The complete genome sequence and comparative genome analysis of the high pathogenicity Yersinia enterocolitica strain 8081.</title>
        <authorList>
            <person name="Thomson N.R."/>
            <person name="Howard S."/>
            <person name="Wren B.W."/>
            <person name="Holden M.T.G."/>
            <person name="Crossman L."/>
            <person name="Challis G.L."/>
            <person name="Churcher C."/>
            <person name="Mungall K."/>
            <person name="Brooks K."/>
            <person name="Chillingworth T."/>
            <person name="Feltwell T."/>
            <person name="Abdellah Z."/>
            <person name="Hauser H."/>
            <person name="Jagels K."/>
            <person name="Maddison M."/>
            <person name="Moule S."/>
            <person name="Sanders M."/>
            <person name="Whitehead S."/>
            <person name="Quail M.A."/>
            <person name="Dougan G."/>
            <person name="Parkhill J."/>
            <person name="Prentice M.B."/>
        </authorList>
    </citation>
    <scope>NUCLEOTIDE SEQUENCE [LARGE SCALE GENOMIC DNA]</scope>
    <source>
        <strain>NCTC 13174 / 8081</strain>
    </source>
</reference>